<proteinExistence type="predicted"/>
<protein>
    <recommendedName>
        <fullName>Putative uncharacterized protein DDB_G0291898</fullName>
    </recommendedName>
</protein>
<keyword id="KW-1185">Reference proteome</keyword>
<sequence length="54" mass="5259">MTIIAPTTGSVSTVSSVFKYGSNSISSGSDSCSGSGSYAYGVSYGVPKIGVSLG</sequence>
<reference key="1">
    <citation type="journal article" date="2005" name="Nature">
        <title>The genome of the social amoeba Dictyostelium discoideum.</title>
        <authorList>
            <person name="Eichinger L."/>
            <person name="Pachebat J.A."/>
            <person name="Gloeckner G."/>
            <person name="Rajandream M.A."/>
            <person name="Sucgang R."/>
            <person name="Berriman M."/>
            <person name="Song J."/>
            <person name="Olsen R."/>
            <person name="Szafranski K."/>
            <person name="Xu Q."/>
            <person name="Tunggal B."/>
            <person name="Kummerfeld S."/>
            <person name="Madera M."/>
            <person name="Konfortov B.A."/>
            <person name="Rivero F."/>
            <person name="Bankier A.T."/>
            <person name="Lehmann R."/>
            <person name="Hamlin N."/>
            <person name="Davies R."/>
            <person name="Gaudet P."/>
            <person name="Fey P."/>
            <person name="Pilcher K."/>
            <person name="Chen G."/>
            <person name="Saunders D."/>
            <person name="Sodergren E.J."/>
            <person name="Davis P."/>
            <person name="Kerhornou A."/>
            <person name="Nie X."/>
            <person name="Hall N."/>
            <person name="Anjard C."/>
            <person name="Hemphill L."/>
            <person name="Bason N."/>
            <person name="Farbrother P."/>
            <person name="Desany B."/>
            <person name="Just E."/>
            <person name="Morio T."/>
            <person name="Rost R."/>
            <person name="Churcher C.M."/>
            <person name="Cooper J."/>
            <person name="Haydock S."/>
            <person name="van Driessche N."/>
            <person name="Cronin A."/>
            <person name="Goodhead I."/>
            <person name="Muzny D.M."/>
            <person name="Mourier T."/>
            <person name="Pain A."/>
            <person name="Lu M."/>
            <person name="Harper D."/>
            <person name="Lindsay R."/>
            <person name="Hauser H."/>
            <person name="James K.D."/>
            <person name="Quiles M."/>
            <person name="Madan Babu M."/>
            <person name="Saito T."/>
            <person name="Buchrieser C."/>
            <person name="Wardroper A."/>
            <person name="Felder M."/>
            <person name="Thangavelu M."/>
            <person name="Johnson D."/>
            <person name="Knights A."/>
            <person name="Loulseged H."/>
            <person name="Mungall K.L."/>
            <person name="Oliver K."/>
            <person name="Price C."/>
            <person name="Quail M.A."/>
            <person name="Urushihara H."/>
            <person name="Hernandez J."/>
            <person name="Rabbinowitsch E."/>
            <person name="Steffen D."/>
            <person name="Sanders M."/>
            <person name="Ma J."/>
            <person name="Kohara Y."/>
            <person name="Sharp S."/>
            <person name="Simmonds M.N."/>
            <person name="Spiegler S."/>
            <person name="Tivey A."/>
            <person name="Sugano S."/>
            <person name="White B."/>
            <person name="Walker D."/>
            <person name="Woodward J.R."/>
            <person name="Winckler T."/>
            <person name="Tanaka Y."/>
            <person name="Shaulsky G."/>
            <person name="Schleicher M."/>
            <person name="Weinstock G.M."/>
            <person name="Rosenthal A."/>
            <person name="Cox E.C."/>
            <person name="Chisholm R.L."/>
            <person name="Gibbs R.A."/>
            <person name="Loomis W.F."/>
            <person name="Platzer M."/>
            <person name="Kay R.R."/>
            <person name="Williams J.G."/>
            <person name="Dear P.H."/>
            <person name="Noegel A.A."/>
            <person name="Barrell B.G."/>
            <person name="Kuspa A."/>
        </authorList>
    </citation>
    <scope>NUCLEOTIDE SEQUENCE [LARGE SCALE GENOMIC DNA]</scope>
    <source>
        <strain>AX4</strain>
    </source>
</reference>
<feature type="chain" id="PRO_0000344401" description="Putative uncharacterized protein DDB_G0291898">
    <location>
        <begin position="1"/>
        <end position="54"/>
    </location>
</feature>
<gene>
    <name type="ORF">DDB_G0291898</name>
</gene>
<dbReference type="EMBL" id="AAFI02000186">
    <property type="protein sequence ID" value="EAL61479.1"/>
    <property type="molecule type" value="Genomic_DNA"/>
</dbReference>
<dbReference type="RefSeq" id="XP_629900.1">
    <property type="nucleotide sequence ID" value="XM_629898.1"/>
</dbReference>
<dbReference type="PaxDb" id="44689-DDB0184124"/>
<dbReference type="EnsemblProtists" id="EAL61479">
    <property type="protein sequence ID" value="EAL61479"/>
    <property type="gene ID" value="DDB_G0291898"/>
</dbReference>
<dbReference type="GeneID" id="8628401"/>
<dbReference type="KEGG" id="ddi:DDB_G0291898"/>
<dbReference type="dictyBase" id="DDB_G0291898"/>
<dbReference type="HOGENOM" id="CLU_3054368_0_0_1"/>
<dbReference type="InParanoid" id="Q54DZ6"/>
<dbReference type="PRO" id="PR:Q54DZ6"/>
<dbReference type="Proteomes" id="UP000002195">
    <property type="component" value="Chromosome 6"/>
</dbReference>
<name>Y4124_DICDI</name>
<accession>Q54DZ6</accession>
<organism>
    <name type="scientific">Dictyostelium discoideum</name>
    <name type="common">Social amoeba</name>
    <dbReference type="NCBI Taxonomy" id="44689"/>
    <lineage>
        <taxon>Eukaryota</taxon>
        <taxon>Amoebozoa</taxon>
        <taxon>Evosea</taxon>
        <taxon>Eumycetozoa</taxon>
        <taxon>Dictyostelia</taxon>
        <taxon>Dictyosteliales</taxon>
        <taxon>Dictyosteliaceae</taxon>
        <taxon>Dictyostelium</taxon>
    </lineage>
</organism>